<name>CRYD_ARATH</name>
<organism>
    <name type="scientific">Arabidopsis thaliana</name>
    <name type="common">Mouse-ear cress</name>
    <dbReference type="NCBI Taxonomy" id="3702"/>
    <lineage>
        <taxon>Eukaryota</taxon>
        <taxon>Viridiplantae</taxon>
        <taxon>Streptophyta</taxon>
        <taxon>Embryophyta</taxon>
        <taxon>Tracheophyta</taxon>
        <taxon>Spermatophyta</taxon>
        <taxon>Magnoliopsida</taxon>
        <taxon>eudicotyledons</taxon>
        <taxon>Gunneridae</taxon>
        <taxon>Pentapetalae</taxon>
        <taxon>rosids</taxon>
        <taxon>malvids</taxon>
        <taxon>Brassicales</taxon>
        <taxon>Brassicaceae</taxon>
        <taxon>Camelineae</taxon>
        <taxon>Arabidopsis</taxon>
    </lineage>
</organism>
<dbReference type="EMBL" id="AF069716">
    <property type="status" value="NOT_ANNOTATED_CDS"/>
    <property type="molecule type" value="Genomic_DNA"/>
</dbReference>
<dbReference type="EMBL" id="CP002688">
    <property type="protein sequence ID" value="AED93369.2"/>
    <property type="molecule type" value="Genomic_DNA"/>
</dbReference>
<dbReference type="EMBL" id="AY065032">
    <property type="protein sequence ID" value="AAL57669.1"/>
    <property type="status" value="ALT_INIT"/>
    <property type="molecule type" value="mRNA"/>
</dbReference>
<dbReference type="EMBL" id="AY102138">
    <property type="protein sequence ID" value="AAM26705.1"/>
    <property type="molecule type" value="mRNA"/>
</dbReference>
<dbReference type="EMBL" id="AB062926">
    <property type="protein sequence ID" value="BAC65244.1"/>
    <property type="molecule type" value="mRNA"/>
</dbReference>
<dbReference type="RefSeq" id="NP_568461.3">
    <property type="nucleotide sequence ID" value="NM_122394.4"/>
</dbReference>
<dbReference type="PDB" id="2IJG">
    <property type="method" value="X-ray"/>
    <property type="resolution" value="2.10 A"/>
    <property type="chains" value="X=44-569"/>
</dbReference>
<dbReference type="PDB" id="2J4D">
    <property type="method" value="X-ray"/>
    <property type="resolution" value="1.90 A"/>
    <property type="chains" value="A/B=45-569"/>
</dbReference>
<dbReference type="PDB" id="2VTB">
    <property type="method" value="X-ray"/>
    <property type="resolution" value="2.01 A"/>
    <property type="chains" value="A/B/C/D/E/F=44-569"/>
</dbReference>
<dbReference type="PDBsum" id="2IJG"/>
<dbReference type="PDBsum" id="2J4D"/>
<dbReference type="PDBsum" id="2VTB"/>
<dbReference type="SMR" id="Q84KJ5"/>
<dbReference type="BioGRID" id="17829">
    <property type="interactions" value="1"/>
</dbReference>
<dbReference type="DIP" id="DIP-48661N"/>
<dbReference type="FunCoup" id="Q84KJ5">
    <property type="interactions" value="45"/>
</dbReference>
<dbReference type="STRING" id="3702.Q84KJ5"/>
<dbReference type="GlyGen" id="Q84KJ5">
    <property type="glycosylation" value="1 site"/>
</dbReference>
<dbReference type="PaxDb" id="3702-AT5G24850.1"/>
<dbReference type="ProteomicsDB" id="220350"/>
<dbReference type="EnsemblPlants" id="AT5G24850.1">
    <property type="protein sequence ID" value="AT5G24850.1"/>
    <property type="gene ID" value="AT5G24850"/>
</dbReference>
<dbReference type="GeneID" id="832554"/>
<dbReference type="Gramene" id="AT5G24850.1">
    <property type="protein sequence ID" value="AT5G24850.1"/>
    <property type="gene ID" value="AT5G24850"/>
</dbReference>
<dbReference type="KEGG" id="ath:AT5G24850"/>
<dbReference type="Araport" id="AT5G24850"/>
<dbReference type="TAIR" id="AT5G24850">
    <property type="gene designation" value="CRY3"/>
</dbReference>
<dbReference type="eggNOG" id="KOG0133">
    <property type="taxonomic scope" value="Eukaryota"/>
</dbReference>
<dbReference type="HOGENOM" id="CLU_010348_6_2_1"/>
<dbReference type="InParanoid" id="Q84KJ5"/>
<dbReference type="OMA" id="NVQGKWS"/>
<dbReference type="OrthoDB" id="435881at2759"/>
<dbReference type="PhylomeDB" id="Q84KJ5"/>
<dbReference type="BRENDA" id="4.1.99.3">
    <property type="organism ID" value="399"/>
</dbReference>
<dbReference type="EvolutionaryTrace" id="Q84KJ5"/>
<dbReference type="PRO" id="PR:Q84KJ5"/>
<dbReference type="Proteomes" id="UP000006548">
    <property type="component" value="Chromosome 5"/>
</dbReference>
<dbReference type="ExpressionAtlas" id="Q84KJ5">
    <property type="expression patterns" value="baseline and differential"/>
</dbReference>
<dbReference type="GO" id="GO:0009507">
    <property type="term" value="C:chloroplast"/>
    <property type="evidence" value="ECO:0007669"/>
    <property type="project" value="UniProtKB-SubCell"/>
</dbReference>
<dbReference type="GO" id="GO:0005739">
    <property type="term" value="C:mitochondrion"/>
    <property type="evidence" value="ECO:0007669"/>
    <property type="project" value="UniProtKB-SubCell"/>
</dbReference>
<dbReference type="GO" id="GO:0005524">
    <property type="term" value="F:ATP binding"/>
    <property type="evidence" value="ECO:0007669"/>
    <property type="project" value="UniProtKB-KW"/>
</dbReference>
<dbReference type="GO" id="GO:0003677">
    <property type="term" value="F:DNA binding"/>
    <property type="evidence" value="ECO:0007669"/>
    <property type="project" value="UniProtKB-KW"/>
</dbReference>
<dbReference type="GO" id="GO:0003913">
    <property type="term" value="F:DNA photolyase activity"/>
    <property type="evidence" value="ECO:0007669"/>
    <property type="project" value="InterPro"/>
</dbReference>
<dbReference type="GO" id="GO:0009881">
    <property type="term" value="F:photoreceptor activity"/>
    <property type="evidence" value="ECO:0007669"/>
    <property type="project" value="UniProtKB-KW"/>
</dbReference>
<dbReference type="GO" id="GO:0000719">
    <property type="term" value="P:photoreactive repair"/>
    <property type="evidence" value="ECO:0000315"/>
    <property type="project" value="CACAO"/>
</dbReference>
<dbReference type="Gene3D" id="1.25.40.80">
    <property type="match status" value="1"/>
</dbReference>
<dbReference type="Gene3D" id="1.10.579.10">
    <property type="entry name" value="DNA Cyclobutane Dipyrimidine Photolyase, subunit A, domain 3"/>
    <property type="match status" value="1"/>
</dbReference>
<dbReference type="Gene3D" id="3.40.50.620">
    <property type="entry name" value="HUPs"/>
    <property type="match status" value="1"/>
</dbReference>
<dbReference type="InterPro" id="IPR014133">
    <property type="entry name" value="Cry_DASH"/>
</dbReference>
<dbReference type="InterPro" id="IPR036134">
    <property type="entry name" value="Crypto/Photolyase_FAD-like_sf"/>
</dbReference>
<dbReference type="InterPro" id="IPR036155">
    <property type="entry name" value="Crypto/Photolyase_N_sf"/>
</dbReference>
<dbReference type="InterPro" id="IPR005101">
    <property type="entry name" value="Cryptochr/Photolyase_FAD-bd"/>
</dbReference>
<dbReference type="InterPro" id="IPR002081">
    <property type="entry name" value="Cryptochrome/DNA_photolyase_1"/>
</dbReference>
<dbReference type="InterPro" id="IPR006050">
    <property type="entry name" value="DNA_photolyase_N"/>
</dbReference>
<dbReference type="InterPro" id="IPR014729">
    <property type="entry name" value="Rossmann-like_a/b/a_fold"/>
</dbReference>
<dbReference type="NCBIfam" id="TIGR02765">
    <property type="entry name" value="crypto_DASH"/>
    <property type="match status" value="1"/>
</dbReference>
<dbReference type="PANTHER" id="PTHR11455">
    <property type="entry name" value="CRYPTOCHROME"/>
    <property type="match status" value="1"/>
</dbReference>
<dbReference type="PANTHER" id="PTHR11455:SF22">
    <property type="entry name" value="CRYPTOCHROME DASH"/>
    <property type="match status" value="1"/>
</dbReference>
<dbReference type="Pfam" id="PF00875">
    <property type="entry name" value="DNA_photolyase"/>
    <property type="match status" value="1"/>
</dbReference>
<dbReference type="Pfam" id="PF03441">
    <property type="entry name" value="FAD_binding_7"/>
    <property type="match status" value="1"/>
</dbReference>
<dbReference type="PRINTS" id="PR00147">
    <property type="entry name" value="DNAPHOTLYASE"/>
</dbReference>
<dbReference type="SUPFAM" id="SSF48173">
    <property type="entry name" value="Cryptochrome/photolyase FAD-binding domain"/>
    <property type="match status" value="1"/>
</dbReference>
<dbReference type="SUPFAM" id="SSF52425">
    <property type="entry name" value="Cryptochrome/photolyase, N-terminal domain"/>
    <property type="match status" value="1"/>
</dbReference>
<dbReference type="PROSITE" id="PS51645">
    <property type="entry name" value="PHR_CRY_ALPHA_BETA"/>
    <property type="match status" value="1"/>
</dbReference>
<sequence length="569" mass="64983">MAASSLSLSSPLSNPLRRFTLHHLHLSKKPLSSSSLFLCSAAKMNDHIHRVPALTEEEIDSVAIKTFERYALPSSSSVKRKGKGVTILWFRNDLRVLDNDALYKAWSSSDTILPVYCLDPRLFHTTHFFNFPKTGALRGGFLMECLVDLRKNLMKRGLNLLIRSGKPEEILPSLAKDFGARTVFAHKETCSEEVDVERLVNQGLKRVGNSTKLELIWGSTMYHKDDLPFDVFDLPDVYTQFRKSVEAKCSIRSSTRIPLSLGPTPSVDDWGDVPTLEKLGVEPQEVTRGMRFVGGESAGVGRVFEYFWKKDLLKVYKETRNGMLGPDYSTKFSPWLAFGCISPRFIYEEVQRYEKERVANNSTYWVLFELIWRDYFRFLSIKCGNSLFHLGGPRNVQGKWSQDQKLFESWRDAKTGYPLIDANMKELSTTGFMSNRGRQIVCSFLVRDMGLDWRMGAEWFETCLLDYDPCSNYGNWTYGAGVGNDPREDRYFSIPKQAQNYDPEGEYVAFWLQQLRRLPKEKRHWPGRLMYMDTVVPLKHGNGPMAGGSKSGGGFRGSHSGRRSRHNGP</sequence>
<reference key="1">
    <citation type="journal article" date="2000" name="Nature">
        <title>Sequence and analysis of chromosome 5 of the plant Arabidopsis thaliana.</title>
        <authorList>
            <person name="Tabata S."/>
            <person name="Kaneko T."/>
            <person name="Nakamura Y."/>
            <person name="Kotani H."/>
            <person name="Kato T."/>
            <person name="Asamizu E."/>
            <person name="Miyajima N."/>
            <person name="Sasamoto S."/>
            <person name="Kimura T."/>
            <person name="Hosouchi T."/>
            <person name="Kawashima K."/>
            <person name="Kohara M."/>
            <person name="Matsumoto M."/>
            <person name="Matsuno A."/>
            <person name="Muraki A."/>
            <person name="Nakayama S."/>
            <person name="Nakazaki N."/>
            <person name="Naruo K."/>
            <person name="Okumura S."/>
            <person name="Shinpo S."/>
            <person name="Takeuchi C."/>
            <person name="Wada T."/>
            <person name="Watanabe A."/>
            <person name="Yamada M."/>
            <person name="Yasuda M."/>
            <person name="Sato S."/>
            <person name="de la Bastide M."/>
            <person name="Huang E."/>
            <person name="Spiegel L."/>
            <person name="Gnoj L."/>
            <person name="O'Shaughnessy A."/>
            <person name="Preston R."/>
            <person name="Habermann K."/>
            <person name="Murray J."/>
            <person name="Johnson D."/>
            <person name="Rohlfing T."/>
            <person name="Nelson J."/>
            <person name="Stoneking T."/>
            <person name="Pepin K."/>
            <person name="Spieth J."/>
            <person name="Sekhon M."/>
            <person name="Armstrong J."/>
            <person name="Becker M."/>
            <person name="Belter E."/>
            <person name="Cordum H."/>
            <person name="Cordes M."/>
            <person name="Courtney L."/>
            <person name="Courtney W."/>
            <person name="Dante M."/>
            <person name="Du H."/>
            <person name="Edwards J."/>
            <person name="Fryman J."/>
            <person name="Haakensen B."/>
            <person name="Lamar E."/>
            <person name="Latreille P."/>
            <person name="Leonard S."/>
            <person name="Meyer R."/>
            <person name="Mulvaney E."/>
            <person name="Ozersky P."/>
            <person name="Riley A."/>
            <person name="Strowmatt C."/>
            <person name="Wagner-McPherson C."/>
            <person name="Wollam A."/>
            <person name="Yoakum M."/>
            <person name="Bell M."/>
            <person name="Dedhia N."/>
            <person name="Parnell L."/>
            <person name="Shah R."/>
            <person name="Rodriguez M."/>
            <person name="Hoon See L."/>
            <person name="Vil D."/>
            <person name="Baker J."/>
            <person name="Kirchoff K."/>
            <person name="Toth K."/>
            <person name="King L."/>
            <person name="Bahret A."/>
            <person name="Miller B."/>
            <person name="Marra M.A."/>
            <person name="Martienssen R."/>
            <person name="McCombie W.R."/>
            <person name="Wilson R.K."/>
            <person name="Murphy G."/>
            <person name="Bancroft I."/>
            <person name="Volckaert G."/>
            <person name="Wambutt R."/>
            <person name="Duesterhoeft A."/>
            <person name="Stiekema W."/>
            <person name="Pohl T."/>
            <person name="Entian K.-D."/>
            <person name="Terryn N."/>
            <person name="Hartley N."/>
            <person name="Bent E."/>
            <person name="Johnson S."/>
            <person name="Langham S.-A."/>
            <person name="McCullagh B."/>
            <person name="Robben J."/>
            <person name="Grymonprez B."/>
            <person name="Zimmermann W."/>
            <person name="Ramsperger U."/>
            <person name="Wedler H."/>
            <person name="Balke K."/>
            <person name="Wedler E."/>
            <person name="Peters S."/>
            <person name="van Staveren M."/>
            <person name="Dirkse W."/>
            <person name="Mooijman P."/>
            <person name="Klein Lankhorst R."/>
            <person name="Weitzenegger T."/>
            <person name="Bothe G."/>
            <person name="Rose M."/>
            <person name="Hauf J."/>
            <person name="Berneiser S."/>
            <person name="Hempel S."/>
            <person name="Feldpausch M."/>
            <person name="Lamberth S."/>
            <person name="Villarroel R."/>
            <person name="Gielen J."/>
            <person name="Ardiles W."/>
            <person name="Bents O."/>
            <person name="Lemcke K."/>
            <person name="Kolesov G."/>
            <person name="Mayer K.F.X."/>
            <person name="Rudd S."/>
            <person name="Schoof H."/>
            <person name="Schueller C."/>
            <person name="Zaccaria P."/>
            <person name="Mewes H.-W."/>
            <person name="Bevan M."/>
            <person name="Fransz P.F."/>
        </authorList>
    </citation>
    <scope>NUCLEOTIDE SEQUENCE [LARGE SCALE GENOMIC DNA]</scope>
    <source>
        <strain>cv. Columbia</strain>
    </source>
</reference>
<reference key="2">
    <citation type="journal article" date="2017" name="Plant J.">
        <title>Araport11: a complete reannotation of the Arabidopsis thaliana reference genome.</title>
        <authorList>
            <person name="Cheng C.Y."/>
            <person name="Krishnakumar V."/>
            <person name="Chan A.P."/>
            <person name="Thibaud-Nissen F."/>
            <person name="Schobel S."/>
            <person name="Town C.D."/>
        </authorList>
    </citation>
    <scope>GENOME REANNOTATION</scope>
    <source>
        <strain>cv. Columbia</strain>
    </source>
</reference>
<reference key="3">
    <citation type="journal article" date="2003" name="Science">
        <title>Empirical analysis of transcriptional activity in the Arabidopsis genome.</title>
        <authorList>
            <person name="Yamada K."/>
            <person name="Lim J."/>
            <person name="Dale J.M."/>
            <person name="Chen H."/>
            <person name="Shinn P."/>
            <person name="Palm C.J."/>
            <person name="Southwick A.M."/>
            <person name="Wu H.C."/>
            <person name="Kim C.J."/>
            <person name="Nguyen M."/>
            <person name="Pham P.K."/>
            <person name="Cheuk R.F."/>
            <person name="Karlin-Newmann G."/>
            <person name="Liu S.X."/>
            <person name="Lam B."/>
            <person name="Sakano H."/>
            <person name="Wu T."/>
            <person name="Yu G."/>
            <person name="Miranda M."/>
            <person name="Quach H.L."/>
            <person name="Tripp M."/>
            <person name="Chang C.H."/>
            <person name="Lee J.M."/>
            <person name="Toriumi M.J."/>
            <person name="Chan M.M."/>
            <person name="Tang C.C."/>
            <person name="Onodera C.S."/>
            <person name="Deng J.M."/>
            <person name="Akiyama K."/>
            <person name="Ansari Y."/>
            <person name="Arakawa T."/>
            <person name="Banh J."/>
            <person name="Banno F."/>
            <person name="Bowser L."/>
            <person name="Brooks S.Y."/>
            <person name="Carninci P."/>
            <person name="Chao Q."/>
            <person name="Choy N."/>
            <person name="Enju A."/>
            <person name="Goldsmith A.D."/>
            <person name="Gurjal M."/>
            <person name="Hansen N.F."/>
            <person name="Hayashizaki Y."/>
            <person name="Johnson-Hopson C."/>
            <person name="Hsuan V.W."/>
            <person name="Iida K."/>
            <person name="Karnes M."/>
            <person name="Khan S."/>
            <person name="Koesema E."/>
            <person name="Ishida J."/>
            <person name="Jiang P.X."/>
            <person name="Jones T."/>
            <person name="Kawai J."/>
            <person name="Kamiya A."/>
            <person name="Meyers C."/>
            <person name="Nakajima M."/>
            <person name="Narusaka M."/>
            <person name="Seki M."/>
            <person name="Sakurai T."/>
            <person name="Satou M."/>
            <person name="Tamse R."/>
            <person name="Vaysberg M."/>
            <person name="Wallender E.K."/>
            <person name="Wong C."/>
            <person name="Yamamura Y."/>
            <person name="Yuan S."/>
            <person name="Shinozaki K."/>
            <person name="Davis R.W."/>
            <person name="Theologis A."/>
            <person name="Ecker J.R."/>
        </authorList>
    </citation>
    <scope>NUCLEOTIDE SEQUENCE [LARGE SCALE MRNA] OF 14-569</scope>
    <source>
        <strain>cv. Columbia</strain>
    </source>
</reference>
<reference key="4">
    <citation type="journal article" date="2003" name="Mol. Cell">
        <title>Identification of a new cryptochrome class. Structure, function, and evolution.</title>
        <authorList>
            <person name="Brudler R."/>
            <person name="Hitomi K."/>
            <person name="Daiyasu H."/>
            <person name="Toh H."/>
            <person name="Kucho K."/>
            <person name="Ishiura M."/>
            <person name="Kanehisa M."/>
            <person name="Roberts V.A."/>
            <person name="Todo T."/>
            <person name="Tainer J.A."/>
            <person name="Getzoff E.D."/>
        </authorList>
    </citation>
    <scope>NUCLEOTIDE SEQUENCE [MRNA] OF 45-569</scope>
</reference>
<reference key="5">
    <citation type="journal article" date="2003" name="Plant J.">
        <title>An Arabidopsis protein closely related to Synechocystis cryptochrome is targeted to organelles.</title>
        <authorList>
            <person name="Kleine T."/>
            <person name="Lockhart P."/>
            <person name="Batschauer A."/>
        </authorList>
    </citation>
    <scope>COFACTOR</scope>
    <scope>SUBCELLULAR LOCATION</scope>
    <scope>LACK OF PHOTOLYASE ACTIVITY</scope>
    <scope>BINDING TO SINGLE-STRANDED AND DOUBLE-STRANDED DNA</scope>
</reference>
<reference key="6">
    <citation type="journal article" date="2006" name="Proc. Natl. Acad. Sci. U.S.A.">
        <title>A cryptochrome/photolyase class of enzymes with single-stranded DNA-specific photolyase activity.</title>
        <authorList>
            <person name="Selby C.P."/>
            <person name="Sancar A."/>
        </authorList>
    </citation>
    <scope>FUNCTION</scope>
</reference>
<reference key="7">
    <citation type="journal article" date="2006" name="Proc. Natl. Acad. Sci. U.S.A.">
        <title>Crystal structure of cryptochrome 3 from Arabidopsis thaliana and its implications for photolyase activity.</title>
        <authorList>
            <person name="Huang Y."/>
            <person name="Baxter R."/>
            <person name="Smith B.S."/>
            <person name="Partch C.L."/>
            <person name="Colbert C.L."/>
            <person name="Deisenhofer J."/>
        </authorList>
    </citation>
    <scope>X-RAY CRYSTALLOGRAPHY (2.1 ANGSTROMS) OF 44-569</scope>
</reference>
<reference key="8">
    <citation type="journal article" date="2007" name="J. Mol. Biol.">
        <title>Cryptochrome 3 from Arabidopsis thaliana: structural and functional analysis of its complex with a folate light antenna.</title>
        <authorList>
            <person name="Klar T."/>
            <person name="Pokorny R."/>
            <person name="Moldt J."/>
            <person name="Batschauer A."/>
            <person name="Essen L.-O."/>
        </authorList>
    </citation>
    <scope>X-RAY CRYSTALLOGRAPHY (1.9 ANGSTROMS) OF 45-569</scope>
    <scope>SUBUNIT</scope>
    <scope>MUTAGENESIS OF GLU-193</scope>
</reference>
<proteinExistence type="evidence at protein level"/>
<gene>
    <name type="primary">CRYD</name>
    <name type="synonym">CRY3</name>
    <name type="ordered locus">At5g24850</name>
    <name type="ORF">F6A4.60</name>
</gene>
<evidence type="ECO:0000250" key="1"/>
<evidence type="ECO:0000255" key="2"/>
<evidence type="ECO:0000256" key="3">
    <source>
        <dbReference type="SAM" id="MobiDB-lite"/>
    </source>
</evidence>
<evidence type="ECO:0000269" key="4">
    <source>
    </source>
</evidence>
<evidence type="ECO:0000269" key="5">
    <source>
    </source>
</evidence>
<evidence type="ECO:0000269" key="6">
    <source>
    </source>
</evidence>
<evidence type="ECO:0000305" key="7"/>
<evidence type="ECO:0007829" key="8">
    <source>
        <dbReference type="PDB" id="2IJG"/>
    </source>
</evidence>
<evidence type="ECO:0007829" key="9">
    <source>
        <dbReference type="PDB" id="2J4D"/>
    </source>
</evidence>
<evidence type="ECO:0007829" key="10">
    <source>
        <dbReference type="PDB" id="2VTB"/>
    </source>
</evidence>
<feature type="transit peptide" description="Chloroplast and mitochondrion" evidence="2">
    <location>
        <begin position="1"/>
        <end status="unknown"/>
    </location>
</feature>
<feature type="chain" id="PRO_0000235318" description="Cryptochrome DASH, chloroplastic/mitochondrial">
    <location>
        <begin status="unknown"/>
        <end position="569"/>
    </location>
</feature>
<feature type="domain" description="Photolyase/cryptochrome alpha/beta">
    <location>
        <begin position="84"/>
        <end position="221"/>
    </location>
</feature>
<feature type="region of interest" description="Disordered" evidence="3">
    <location>
        <begin position="541"/>
        <end position="569"/>
    </location>
</feature>
<feature type="compositionally biased region" description="Gly residues" evidence="3">
    <location>
        <begin position="544"/>
        <end position="556"/>
    </location>
</feature>
<feature type="compositionally biased region" description="Basic residues" evidence="3">
    <location>
        <begin position="559"/>
        <end position="569"/>
    </location>
</feature>
<feature type="binding site" evidence="1">
    <location>
        <position position="316"/>
    </location>
    <ligand>
        <name>FAD</name>
        <dbReference type="ChEBI" id="CHEBI:57692"/>
    </ligand>
</feature>
<feature type="binding site" evidence="1">
    <location>
        <begin position="329"/>
        <end position="333"/>
    </location>
    <ligand>
        <name>FAD</name>
        <dbReference type="ChEBI" id="CHEBI:57692"/>
    </ligand>
</feature>
<feature type="binding site" evidence="1">
    <location>
        <position position="436"/>
    </location>
    <ligand>
        <name>ATP</name>
        <dbReference type="ChEBI" id="CHEBI:30616"/>
    </ligand>
</feature>
<feature type="binding site" evidence="1">
    <location>
        <position position="466"/>
    </location>
    <ligand>
        <name>FAD</name>
        <dbReference type="ChEBI" id="CHEBI:57692"/>
    </ligand>
</feature>
<feature type="binding site" evidence="1">
    <location>
        <position position="468"/>
    </location>
    <ligand>
        <name>FAD</name>
        <dbReference type="ChEBI" id="CHEBI:57692"/>
    </ligand>
</feature>
<feature type="binding site" evidence="1">
    <location>
        <position position="485"/>
    </location>
    <ligand>
        <name>ATP</name>
        <dbReference type="ChEBI" id="CHEBI:30616"/>
    </ligand>
</feature>
<feature type="mutagenesis site" description="Loss of binding of the MTHF cofactor." evidence="6">
    <original>E</original>
    <variation>A</variation>
    <location>
        <position position="193"/>
    </location>
</feature>
<feature type="strand" evidence="9">
    <location>
        <begin position="48"/>
        <end position="52"/>
    </location>
</feature>
<feature type="helix" evidence="9">
    <location>
        <begin position="56"/>
        <end position="70"/>
    </location>
</feature>
<feature type="strand" evidence="10">
    <location>
        <begin position="76"/>
        <end position="78"/>
    </location>
</feature>
<feature type="strand" evidence="9">
    <location>
        <begin position="85"/>
        <end position="92"/>
    </location>
</feature>
<feature type="helix" evidence="9">
    <location>
        <begin position="100"/>
        <end position="107"/>
    </location>
</feature>
<feature type="strand" evidence="9">
    <location>
        <begin position="110"/>
        <end position="118"/>
    </location>
</feature>
<feature type="helix" evidence="9">
    <location>
        <begin position="120"/>
        <end position="123"/>
    </location>
</feature>
<feature type="turn" evidence="9">
    <location>
        <begin position="127"/>
        <end position="129"/>
    </location>
</feature>
<feature type="strand" evidence="9">
    <location>
        <begin position="132"/>
        <end position="134"/>
    </location>
</feature>
<feature type="helix" evidence="9">
    <location>
        <begin position="136"/>
        <end position="155"/>
    </location>
</feature>
<feature type="strand" evidence="9">
    <location>
        <begin position="161"/>
        <end position="165"/>
    </location>
</feature>
<feature type="helix" evidence="9">
    <location>
        <begin position="167"/>
        <end position="178"/>
    </location>
</feature>
<feature type="strand" evidence="9">
    <location>
        <begin position="181"/>
        <end position="186"/>
    </location>
</feature>
<feature type="helix" evidence="9">
    <location>
        <begin position="191"/>
        <end position="205"/>
    </location>
</feature>
<feature type="strand" evidence="9">
    <location>
        <begin position="212"/>
        <end position="216"/>
    </location>
</feature>
<feature type="strand" evidence="8">
    <location>
        <begin position="219"/>
        <end position="222"/>
    </location>
</feature>
<feature type="helix" evidence="9">
    <location>
        <begin position="224"/>
        <end position="226"/>
    </location>
</feature>
<feature type="strand" evidence="9">
    <location>
        <begin position="227"/>
        <end position="229"/>
    </location>
</feature>
<feature type="helix" evidence="9">
    <location>
        <begin position="231"/>
        <end position="233"/>
    </location>
</feature>
<feature type="helix" evidence="9">
    <location>
        <begin position="238"/>
        <end position="248"/>
    </location>
</feature>
<feature type="turn" evidence="9">
    <location>
        <begin position="276"/>
        <end position="280"/>
    </location>
</feature>
<feature type="strand" evidence="9">
    <location>
        <begin position="288"/>
        <end position="292"/>
    </location>
</feature>
<feature type="helix" evidence="9">
    <location>
        <begin position="296"/>
        <end position="307"/>
    </location>
</feature>
<feature type="helix" evidence="9">
    <location>
        <begin position="313"/>
        <end position="315"/>
    </location>
</feature>
<feature type="helix" evidence="9">
    <location>
        <begin position="316"/>
        <end position="319"/>
    </location>
</feature>
<feature type="strand" evidence="9">
    <location>
        <begin position="324"/>
        <end position="326"/>
    </location>
</feature>
<feature type="helix" evidence="9">
    <location>
        <begin position="333"/>
        <end position="337"/>
    </location>
</feature>
<feature type="helix" evidence="9">
    <location>
        <begin position="343"/>
        <end position="356"/>
    </location>
</feature>
<feature type="helix" evidence="9">
    <location>
        <begin position="361"/>
        <end position="383"/>
    </location>
</feature>
<feature type="helix" evidence="9">
    <location>
        <begin position="384"/>
        <end position="387"/>
    </location>
</feature>
<feature type="turn" evidence="9">
    <location>
        <begin position="390"/>
        <end position="395"/>
    </location>
</feature>
<feature type="helix" evidence="9">
    <location>
        <begin position="404"/>
        <end position="411"/>
    </location>
</feature>
<feature type="helix" evidence="9">
    <location>
        <begin position="418"/>
        <end position="430"/>
    </location>
</feature>
<feature type="helix" evidence="9">
    <location>
        <begin position="435"/>
        <end position="447"/>
    </location>
</feature>
<feature type="helix" evidence="9">
    <location>
        <begin position="453"/>
        <end position="463"/>
    </location>
</feature>
<feature type="helix" evidence="9">
    <location>
        <begin position="469"/>
        <end position="479"/>
    </location>
</feature>
<feature type="strand" evidence="10">
    <location>
        <begin position="483"/>
        <end position="485"/>
    </location>
</feature>
<feature type="helix" evidence="9">
    <location>
        <begin position="486"/>
        <end position="488"/>
    </location>
</feature>
<feature type="helix" evidence="9">
    <location>
        <begin position="494"/>
        <end position="501"/>
    </location>
</feature>
<feature type="helix" evidence="9">
    <location>
        <begin position="506"/>
        <end position="511"/>
    </location>
</feature>
<feature type="helix" evidence="9">
    <location>
        <begin position="513"/>
        <end position="515"/>
    </location>
</feature>
<feature type="turn" evidence="9">
    <location>
        <begin position="520"/>
        <end position="524"/>
    </location>
</feature>
<feature type="helix" evidence="9">
    <location>
        <begin position="527"/>
        <end position="530"/>
    </location>
</feature>
<feature type="strand" evidence="10">
    <location>
        <begin position="539"/>
        <end position="541"/>
    </location>
</feature>
<keyword id="KW-0002">3D-structure</keyword>
<keyword id="KW-0067">ATP-binding</keyword>
<keyword id="KW-0150">Chloroplast</keyword>
<keyword id="KW-0157">Chromophore</keyword>
<keyword id="KW-0238">DNA-binding</keyword>
<keyword id="KW-0274">FAD</keyword>
<keyword id="KW-0285">Flavoprotein</keyword>
<keyword id="KW-0496">Mitochondrion</keyword>
<keyword id="KW-0547">Nucleotide-binding</keyword>
<keyword id="KW-0600">Photoreceptor protein</keyword>
<keyword id="KW-0934">Plastid</keyword>
<keyword id="KW-0675">Receptor</keyword>
<keyword id="KW-1185">Reference proteome</keyword>
<keyword id="KW-0716">Sensory transduction</keyword>
<keyword id="KW-0809">Transit peptide</keyword>
<accession>Q84KJ5</accession>
<accession>F4KIJ6</accession>
<accession>Q8VZD8</accession>
<comment type="function">
    <text evidence="5">May have a photoreceptor function. Binds ss- and ds-DNA in a sequence non-specific manner. Has a photolyase activity specific for cyclobutane pyrimidine dimers in ssDNA.</text>
</comment>
<comment type="cofactor">
    <cofactor evidence="4">
        <name>FAD</name>
        <dbReference type="ChEBI" id="CHEBI:57692"/>
    </cofactor>
    <text evidence="4">Binds 1 FAD per subunit.</text>
</comment>
<comment type="cofactor">
    <cofactor evidence="4">
        <name>(6R)-5,10-methylene-5,6,7,8-tetrahydrofolate</name>
        <dbReference type="ChEBI" id="CHEBI:15636"/>
    </cofactor>
    <text evidence="4">Binds 1 5,10-methenyltetrahydrofolate (MTHF) per subunit.</text>
</comment>
<comment type="subunit">
    <text evidence="6">Homodimer.</text>
</comment>
<comment type="subcellular location">
    <subcellularLocation>
        <location evidence="4">Plastid</location>
        <location evidence="4">Chloroplast</location>
    </subcellularLocation>
    <subcellularLocation>
        <location evidence="4">Mitochondrion</location>
    </subcellularLocation>
</comment>
<comment type="miscellaneous">
    <text>5,10-methenyltetrahydrofolate (MTHF) acts as a functional antenna for the photoreduction of FAD.</text>
</comment>
<comment type="similarity">
    <text evidence="7">Belongs to the DNA photolyase class-1 family.</text>
</comment>
<comment type="sequence caution" evidence="7">
    <conflict type="erroneous initiation">
        <sequence resource="EMBL-CDS" id="AAL57669"/>
    </conflict>
    <text>Truncated N-terminus.</text>
</comment>
<protein>
    <recommendedName>
        <fullName>Cryptochrome DASH, chloroplastic/mitochondrial</fullName>
    </recommendedName>
    <alternativeName>
        <fullName>Cryptochrome-3</fullName>
    </alternativeName>
</protein>